<reference key="1">
    <citation type="journal article" date="1986" name="Curr. Genet.">
        <title>Cytochrome b-559 genes from Oenothera hookeri and Nicotiana tabacum show a remarkably high degree of conservation as compared to spinach. The enigma of cytochrome b-559: highly conserved genes and proteins but no known function.</title>
        <authorList>
            <person name="Carrillo N."/>
            <person name="Seyer P."/>
            <person name="Tyagi A."/>
            <person name="Herrmann R.G."/>
        </authorList>
    </citation>
    <scope>NUCLEOTIDE SEQUENCE [GENOMIC DNA]</scope>
</reference>
<reference key="2">
    <citation type="journal article" date="1986" name="EMBO J.">
        <title>The complete nucleotide sequence of the tobacco chloroplast genome: its gene organization and expression.</title>
        <authorList>
            <person name="Shinozaki K."/>
            <person name="Ohme M."/>
            <person name="Tanaka M."/>
            <person name="Wakasugi T."/>
            <person name="Hayashida N."/>
            <person name="Matsubayashi T."/>
            <person name="Zaita N."/>
            <person name="Chunwongse J."/>
            <person name="Obokata J."/>
            <person name="Yamaguchi-Shinozaki K."/>
            <person name="Ohto C."/>
            <person name="Torazawa K."/>
            <person name="Meng B.-Y."/>
            <person name="Sugita M."/>
            <person name="Deno H."/>
            <person name="Kamogashira T."/>
            <person name="Yamada K."/>
            <person name="Kusuda J."/>
            <person name="Takaiwa F."/>
            <person name="Kato A."/>
            <person name="Tohdoh N."/>
            <person name="Shimada H."/>
            <person name="Sugiura M."/>
        </authorList>
    </citation>
    <scope>NUCLEOTIDE SEQUENCE [LARGE SCALE GENOMIC DNA]</scope>
    <source>
        <strain>cv. Bright Yellow 4</strain>
    </source>
</reference>
<reference key="3">
    <citation type="journal article" date="2003" name="Mol. Genet. Genomics">
        <title>Effects of selective inactivation of individual genes for low-molecular-mass subunits on the assembly of photosystem II, as revealed by chloroplast transformation: the psbEFLJoperon in Nicotiana tabacum.</title>
        <authorList>
            <person name="Swiatek M."/>
            <person name="Regel R.E."/>
            <person name="Meurer J."/>
            <person name="Wanner G."/>
            <person name="Pakrasi H.B."/>
            <person name="Ohad I."/>
            <person name="Herrmann R.G."/>
        </authorList>
    </citation>
    <scope>FUNCTION</scope>
    <scope>DISRUPTION PHENOTYPE</scope>
    <source>
        <strain>cv. Petit Havana</strain>
    </source>
</reference>
<feature type="chain" id="PRO_0000200340" description="Cytochrome b559 subunit alpha">
    <location>
        <begin position="1"/>
        <end position="83"/>
    </location>
</feature>
<feature type="transmembrane region" description="Helical" evidence="1">
    <location>
        <begin position="21"/>
        <end position="35"/>
    </location>
</feature>
<feature type="binding site" description="axial binding residue" evidence="1">
    <location>
        <position position="23"/>
    </location>
    <ligand>
        <name>heme</name>
        <dbReference type="ChEBI" id="CHEBI:30413"/>
        <note>ligand shared with beta subunit</note>
    </ligand>
    <ligandPart>
        <name>Fe</name>
        <dbReference type="ChEBI" id="CHEBI:18248"/>
    </ligandPart>
</feature>
<evidence type="ECO:0000255" key="1">
    <source>
        <dbReference type="HAMAP-Rule" id="MF_00642"/>
    </source>
</evidence>
<evidence type="ECO:0000269" key="2">
    <source>
    </source>
</evidence>
<sequence>MSGSTGERSFADIITSIRYWVIHSITIPSLFIAGWLFVSTGLAYDVFGSPRPNEYFTESRQGIPLITGRFDPLEQLDEFSRSF</sequence>
<dbReference type="EMBL" id="X03781">
    <property type="protein sequence ID" value="CAA27412.1"/>
    <property type="molecule type" value="Genomic_DNA"/>
</dbReference>
<dbReference type="EMBL" id="Z00044">
    <property type="protein sequence ID" value="CAA77368.1"/>
    <property type="molecule type" value="Genomic_DNA"/>
</dbReference>
<dbReference type="PIR" id="S55791">
    <property type="entry name" value="CBNT55"/>
</dbReference>
<dbReference type="RefSeq" id="NP_054517.1">
    <property type="nucleotide sequence ID" value="NC_001879.2"/>
</dbReference>
<dbReference type="SMR" id="P69384"/>
<dbReference type="GeneID" id="800531"/>
<dbReference type="KEGG" id="nta:800531"/>
<dbReference type="OMA" id="VRYWVIH"/>
<dbReference type="OrthoDB" id="1245051at2759"/>
<dbReference type="Proteomes" id="UP000084051">
    <property type="component" value="Unplaced"/>
</dbReference>
<dbReference type="GO" id="GO:0009535">
    <property type="term" value="C:chloroplast thylakoid membrane"/>
    <property type="evidence" value="ECO:0007669"/>
    <property type="project" value="UniProtKB-SubCell"/>
</dbReference>
<dbReference type="GO" id="GO:0009539">
    <property type="term" value="C:photosystem II reaction center"/>
    <property type="evidence" value="ECO:0007669"/>
    <property type="project" value="InterPro"/>
</dbReference>
<dbReference type="GO" id="GO:0009055">
    <property type="term" value="F:electron transfer activity"/>
    <property type="evidence" value="ECO:0007669"/>
    <property type="project" value="UniProtKB-UniRule"/>
</dbReference>
<dbReference type="GO" id="GO:0020037">
    <property type="term" value="F:heme binding"/>
    <property type="evidence" value="ECO:0007669"/>
    <property type="project" value="InterPro"/>
</dbReference>
<dbReference type="GO" id="GO:0005506">
    <property type="term" value="F:iron ion binding"/>
    <property type="evidence" value="ECO:0007669"/>
    <property type="project" value="UniProtKB-UniRule"/>
</dbReference>
<dbReference type="GO" id="GO:0009767">
    <property type="term" value="P:photosynthetic electron transport chain"/>
    <property type="evidence" value="ECO:0007669"/>
    <property type="project" value="InterPro"/>
</dbReference>
<dbReference type="Gene3D" id="1.20.5.860">
    <property type="entry name" value="Photosystem II cytochrome b559, alpha subunit"/>
    <property type="match status" value="1"/>
</dbReference>
<dbReference type="HAMAP" id="MF_00642">
    <property type="entry name" value="PSII_PsbE"/>
    <property type="match status" value="1"/>
</dbReference>
<dbReference type="InterPro" id="IPR006217">
    <property type="entry name" value="PSII_cyt_b559_asu"/>
</dbReference>
<dbReference type="InterPro" id="IPR037025">
    <property type="entry name" value="PSII_cyt_b559_asu_sf"/>
</dbReference>
<dbReference type="InterPro" id="IPR006216">
    <property type="entry name" value="PSII_cyt_b559_CS"/>
</dbReference>
<dbReference type="InterPro" id="IPR013081">
    <property type="entry name" value="PSII_cyt_b559_N"/>
</dbReference>
<dbReference type="InterPro" id="IPR013082">
    <property type="entry name" value="PSII_cytb559_asu_lum"/>
</dbReference>
<dbReference type="NCBIfam" id="TIGR01332">
    <property type="entry name" value="cyt_b559_alpha"/>
    <property type="match status" value="1"/>
</dbReference>
<dbReference type="PANTHER" id="PTHR33391">
    <property type="entry name" value="CYTOCHROME B559 SUBUNIT BETA-RELATED"/>
    <property type="match status" value="1"/>
</dbReference>
<dbReference type="PANTHER" id="PTHR33391:SF9">
    <property type="entry name" value="CYTOCHROME B559 SUBUNIT BETA-RELATED"/>
    <property type="match status" value="1"/>
</dbReference>
<dbReference type="Pfam" id="PF00283">
    <property type="entry name" value="Cytochrom_B559"/>
    <property type="match status" value="1"/>
</dbReference>
<dbReference type="Pfam" id="PF00284">
    <property type="entry name" value="Cytochrom_B559a"/>
    <property type="match status" value="1"/>
</dbReference>
<dbReference type="PIRSF" id="PIRSF000036">
    <property type="entry name" value="PsbE"/>
    <property type="match status" value="1"/>
</dbReference>
<dbReference type="SUPFAM" id="SSF161045">
    <property type="entry name" value="Cytochrome b559 subunits"/>
    <property type="match status" value="1"/>
</dbReference>
<dbReference type="PROSITE" id="PS00537">
    <property type="entry name" value="CYTOCHROME_B559"/>
    <property type="match status" value="1"/>
</dbReference>
<protein>
    <recommendedName>
        <fullName evidence="1">Cytochrome b559 subunit alpha</fullName>
    </recommendedName>
    <alternativeName>
        <fullName evidence="1">PSII reaction center subunit V</fullName>
    </alternativeName>
</protein>
<proteinExistence type="inferred from homology"/>
<gene>
    <name evidence="1" type="primary">psbE</name>
</gene>
<accession>P69384</accession>
<accession>P05168</accession>
<geneLocation type="chloroplast"/>
<comment type="function">
    <text evidence="1 2">This b-type cytochrome is tightly associated with the reaction center of photosystem II (PSII), and is essential for PSII function (PubMed:12655396). PSII is a light-driven water:plastoquinone oxidoreductase that uses light energy to abstract electrons from H(2)O, generating O(2) and a proton gradient subsequently used for ATP formation. It consists of a core antenna complex that captures photons, and an electron transfer chain that converts photonic excitation into a charge separation.</text>
</comment>
<comment type="cofactor">
    <cofactor evidence="1">
        <name>heme b</name>
        <dbReference type="ChEBI" id="CHEBI:60344"/>
    </cofactor>
    <text evidence="1">With its partner (PsbF) binds heme. PSII binds additional chlorophylls, carotenoids and specific lipids.</text>
</comment>
<comment type="subunit">
    <text evidence="1">Heterodimer of an alpha subunit and a beta subunit. PSII is composed of 1 copy each of membrane proteins PsbA, PsbB, PsbC, PsbD, PsbE, PsbF, PsbH, PsbI, PsbJ, PsbK, PsbL, PsbM, PsbT, PsbX, PsbY, PsbZ, Psb30/Ycf12, at least 3 peripheral proteins of the oxygen-evolving complex and a large number of cofactors. It forms dimeric complexes.</text>
</comment>
<comment type="subcellular location">
    <subcellularLocation>
        <location evidence="1">Plastid</location>
        <location evidence="1">Chloroplast thylakoid membrane</location>
        <topology evidence="1">Single-pass membrane protein</topology>
    </subcellularLocation>
</comment>
<comment type="disruption phenotype">
    <text evidence="2">Plants unable to grow photoautotrophically, no detectable PSII activity although under low light (10 umol photons/m(2)/s) on a carbon source plants are green.</text>
</comment>
<comment type="similarity">
    <text evidence="1">Belongs to the PsbE/PsbF family.</text>
</comment>
<keyword id="KW-0150">Chloroplast</keyword>
<keyword id="KW-0249">Electron transport</keyword>
<keyword id="KW-0349">Heme</keyword>
<keyword id="KW-0408">Iron</keyword>
<keyword id="KW-0472">Membrane</keyword>
<keyword id="KW-0479">Metal-binding</keyword>
<keyword id="KW-0602">Photosynthesis</keyword>
<keyword id="KW-0604">Photosystem II</keyword>
<keyword id="KW-0934">Plastid</keyword>
<keyword id="KW-1185">Reference proteome</keyword>
<keyword id="KW-0793">Thylakoid</keyword>
<keyword id="KW-0812">Transmembrane</keyword>
<keyword id="KW-1133">Transmembrane helix</keyword>
<keyword id="KW-0813">Transport</keyword>
<name>PSBE_TOBAC</name>
<organism>
    <name type="scientific">Nicotiana tabacum</name>
    <name type="common">Common tobacco</name>
    <dbReference type="NCBI Taxonomy" id="4097"/>
    <lineage>
        <taxon>Eukaryota</taxon>
        <taxon>Viridiplantae</taxon>
        <taxon>Streptophyta</taxon>
        <taxon>Embryophyta</taxon>
        <taxon>Tracheophyta</taxon>
        <taxon>Spermatophyta</taxon>
        <taxon>Magnoliopsida</taxon>
        <taxon>eudicotyledons</taxon>
        <taxon>Gunneridae</taxon>
        <taxon>Pentapetalae</taxon>
        <taxon>asterids</taxon>
        <taxon>lamiids</taxon>
        <taxon>Solanales</taxon>
        <taxon>Solanaceae</taxon>
        <taxon>Nicotianoideae</taxon>
        <taxon>Nicotianeae</taxon>
        <taxon>Nicotiana</taxon>
    </lineage>
</organism>